<comment type="function">
    <text>Subtilisin is an extracellular alkaline serine protease, it catalyzes the hydrolysis of proteins and peptide amides.</text>
</comment>
<comment type="catalytic activity">
    <reaction>
        <text>Hydrolysis of proteins with broad specificity for peptide bonds, and a preference for a large uncharged residue in P1. Hydrolyzes peptide amides.</text>
        <dbReference type="EC" id="3.4.21.62"/>
    </reaction>
</comment>
<comment type="cofactor">
    <cofactor evidence="1">
        <name>Ca(2+)</name>
        <dbReference type="ChEBI" id="CHEBI:29108"/>
    </cofactor>
    <text evidence="1">Binds 2 calcium ions per subunit.</text>
</comment>
<comment type="subcellular location">
    <subcellularLocation>
        <location>Secreted</location>
    </subcellularLocation>
</comment>
<comment type="miscellaneous">
    <text>Secretion of subtilisin is associated with onset of sporulation, and many mutations which block sporulation at early stages affect expression levels of subtilisin. However, subtilisin is not necessary for normal sporulation.</text>
</comment>
<comment type="similarity">
    <text evidence="4">Belongs to the peptidase S8 family.</text>
</comment>
<proteinExistence type="inferred from homology"/>
<feature type="signal peptide" evidence="2">
    <location>
        <begin position="1"/>
        <end position="29"/>
    </location>
</feature>
<feature type="propeptide" id="PRO_0000027185" evidence="2">
    <location>
        <begin position="30"/>
        <end position="106"/>
    </location>
</feature>
<feature type="chain" id="PRO_0000027186" description="Subtilisin J">
    <location>
        <begin position="107"/>
        <end position="381"/>
    </location>
</feature>
<feature type="domain" description="Inhibitor I9" evidence="2">
    <location>
        <begin position="38"/>
        <end position="103"/>
    </location>
</feature>
<feature type="domain" description="Peptidase S8" evidence="3">
    <location>
        <begin position="111"/>
        <end position="380"/>
    </location>
</feature>
<feature type="active site" description="Charge relay system" evidence="3">
    <location>
        <position position="138"/>
    </location>
</feature>
<feature type="active site" description="Charge relay system" evidence="3">
    <location>
        <position position="170"/>
    </location>
</feature>
<feature type="active site" description="Charge relay system" evidence="3">
    <location>
        <position position="327"/>
    </location>
</feature>
<feature type="binding site" evidence="1">
    <location>
        <position position="108"/>
    </location>
    <ligand>
        <name>Ca(2+)</name>
        <dbReference type="ChEBI" id="CHEBI:29108"/>
        <label>1</label>
    </ligand>
</feature>
<feature type="binding site" evidence="1">
    <location>
        <position position="147"/>
    </location>
    <ligand>
        <name>Ca(2+)</name>
        <dbReference type="ChEBI" id="CHEBI:29108"/>
        <label>1</label>
    </ligand>
</feature>
<feature type="binding site" evidence="1">
    <location>
        <position position="181"/>
    </location>
    <ligand>
        <name>Ca(2+)</name>
        <dbReference type="ChEBI" id="CHEBI:29108"/>
        <label>1</label>
    </ligand>
</feature>
<feature type="binding site" evidence="1">
    <location>
        <position position="183"/>
    </location>
    <ligand>
        <name>Ca(2+)</name>
        <dbReference type="ChEBI" id="CHEBI:29108"/>
        <label>1</label>
    </ligand>
</feature>
<feature type="binding site" evidence="1">
    <location>
        <position position="185"/>
    </location>
    <ligand>
        <name>Ca(2+)</name>
        <dbReference type="ChEBI" id="CHEBI:29108"/>
        <label>1</label>
    </ligand>
</feature>
<feature type="binding site" evidence="1">
    <location>
        <position position="187"/>
    </location>
    <ligand>
        <name>Ca(2+)</name>
        <dbReference type="ChEBI" id="CHEBI:29108"/>
        <label>1</label>
    </ligand>
</feature>
<feature type="binding site" evidence="1">
    <location>
        <position position="275"/>
    </location>
    <ligand>
        <name>Ca(2+)</name>
        <dbReference type="ChEBI" id="CHEBI:29108"/>
        <label>2</label>
    </ligand>
</feature>
<feature type="binding site" evidence="1">
    <location>
        <position position="277"/>
    </location>
    <ligand>
        <name>Ca(2+)</name>
        <dbReference type="ChEBI" id="CHEBI:29108"/>
        <label>2</label>
    </ligand>
</feature>
<feature type="binding site" evidence="1">
    <location>
        <position position="280"/>
    </location>
    <ligand>
        <name>Ca(2+)</name>
        <dbReference type="ChEBI" id="CHEBI:29108"/>
        <label>2</label>
    </ligand>
</feature>
<gene>
    <name type="primary">aprJ</name>
</gene>
<name>SUBT_GEOSE</name>
<accession>P29142</accession>
<dbReference type="EC" id="3.4.21.62"/>
<dbReference type="EMBL" id="M64743">
    <property type="protein sequence ID" value="AAA22247.1"/>
    <property type="molecule type" value="Genomic_DNA"/>
</dbReference>
<dbReference type="PIR" id="JQ1487">
    <property type="entry name" value="JQ1487"/>
</dbReference>
<dbReference type="BMRB" id="P29142"/>
<dbReference type="SMR" id="P29142"/>
<dbReference type="MEROPS" id="I09.001"/>
<dbReference type="MEROPS" id="S08.035"/>
<dbReference type="GO" id="GO:0005576">
    <property type="term" value="C:extracellular region"/>
    <property type="evidence" value="ECO:0007669"/>
    <property type="project" value="UniProtKB-SubCell"/>
</dbReference>
<dbReference type="GO" id="GO:0046872">
    <property type="term" value="F:metal ion binding"/>
    <property type="evidence" value="ECO:0007669"/>
    <property type="project" value="UniProtKB-KW"/>
</dbReference>
<dbReference type="GO" id="GO:0004252">
    <property type="term" value="F:serine-type endopeptidase activity"/>
    <property type="evidence" value="ECO:0007669"/>
    <property type="project" value="UniProtKB-EC"/>
</dbReference>
<dbReference type="GO" id="GO:0006508">
    <property type="term" value="P:proteolysis"/>
    <property type="evidence" value="ECO:0007669"/>
    <property type="project" value="UniProtKB-KW"/>
</dbReference>
<dbReference type="GO" id="GO:0030435">
    <property type="term" value="P:sporulation resulting in formation of a cellular spore"/>
    <property type="evidence" value="ECO:0007669"/>
    <property type="project" value="UniProtKB-KW"/>
</dbReference>
<dbReference type="CDD" id="cd07477">
    <property type="entry name" value="Peptidases_S8_Subtilisin_subset"/>
    <property type="match status" value="1"/>
</dbReference>
<dbReference type="FunFam" id="3.40.50.200:FF:000055">
    <property type="entry name" value="Tk-subtilisin"/>
    <property type="match status" value="1"/>
</dbReference>
<dbReference type="Gene3D" id="3.30.70.80">
    <property type="entry name" value="Peptidase S8 propeptide/proteinase inhibitor I9"/>
    <property type="match status" value="1"/>
</dbReference>
<dbReference type="Gene3D" id="3.40.50.200">
    <property type="entry name" value="Peptidase S8/S53 domain"/>
    <property type="match status" value="1"/>
</dbReference>
<dbReference type="InterPro" id="IPR000209">
    <property type="entry name" value="Peptidase_S8/S53_dom"/>
</dbReference>
<dbReference type="InterPro" id="IPR036852">
    <property type="entry name" value="Peptidase_S8/S53_dom_sf"/>
</dbReference>
<dbReference type="InterPro" id="IPR023827">
    <property type="entry name" value="Peptidase_S8_Asp-AS"/>
</dbReference>
<dbReference type="InterPro" id="IPR022398">
    <property type="entry name" value="Peptidase_S8_His-AS"/>
</dbReference>
<dbReference type="InterPro" id="IPR023828">
    <property type="entry name" value="Peptidase_S8_Ser-AS"/>
</dbReference>
<dbReference type="InterPro" id="IPR050131">
    <property type="entry name" value="Peptidase_S8_subtilisin-like"/>
</dbReference>
<dbReference type="InterPro" id="IPR015500">
    <property type="entry name" value="Peptidase_S8_subtilisin-rel"/>
</dbReference>
<dbReference type="InterPro" id="IPR010259">
    <property type="entry name" value="S8pro/Inhibitor_I9"/>
</dbReference>
<dbReference type="InterPro" id="IPR037045">
    <property type="entry name" value="S8pro/Inhibitor_I9_sf"/>
</dbReference>
<dbReference type="InterPro" id="IPR034202">
    <property type="entry name" value="Subtilisin_Carlsberg-like"/>
</dbReference>
<dbReference type="PANTHER" id="PTHR43806:SF11">
    <property type="entry name" value="CEREVISIN-RELATED"/>
    <property type="match status" value="1"/>
</dbReference>
<dbReference type="PANTHER" id="PTHR43806">
    <property type="entry name" value="PEPTIDASE S8"/>
    <property type="match status" value="1"/>
</dbReference>
<dbReference type="Pfam" id="PF05922">
    <property type="entry name" value="Inhibitor_I9"/>
    <property type="match status" value="1"/>
</dbReference>
<dbReference type="Pfam" id="PF00082">
    <property type="entry name" value="Peptidase_S8"/>
    <property type="match status" value="1"/>
</dbReference>
<dbReference type="PRINTS" id="PR00723">
    <property type="entry name" value="SUBTILISIN"/>
</dbReference>
<dbReference type="SUPFAM" id="SSF54897">
    <property type="entry name" value="Protease propeptides/inhibitors"/>
    <property type="match status" value="1"/>
</dbReference>
<dbReference type="SUPFAM" id="SSF52743">
    <property type="entry name" value="Subtilisin-like"/>
    <property type="match status" value="1"/>
</dbReference>
<dbReference type="PROSITE" id="PS51892">
    <property type="entry name" value="SUBTILASE"/>
    <property type="match status" value="1"/>
</dbReference>
<dbReference type="PROSITE" id="PS00136">
    <property type="entry name" value="SUBTILASE_ASP"/>
    <property type="match status" value="1"/>
</dbReference>
<dbReference type="PROSITE" id="PS00137">
    <property type="entry name" value="SUBTILASE_HIS"/>
    <property type="match status" value="1"/>
</dbReference>
<dbReference type="PROSITE" id="PS00138">
    <property type="entry name" value="SUBTILASE_SER"/>
    <property type="match status" value="1"/>
</dbReference>
<sequence length="381" mass="39495">MRSKKLWISLLFALTLIFTMAFSNMSVQAAGKSSTEKKYIVGFKQTMSAMSSAKKKDVISEKGGKVQKQFKYVNAAAATLDEKAVKELKKDPSVAYVEEDHIAHEYAQSVPYGISQIKAPALHSQGYTGSNVKVAVIDSGIDSSHPDLNVRGGASFVPSETNPYQDGSSHGTHVAGTIAALNNSIGVLGVSPSASLYAVKVLDSTGSGQYSWIINGIEWAISNNMDVINMSLGGPSGSTALKTVVDKAVSSGIVVAAAAGNEGSSGSSSTVGYPAKYPSTIAVGAVNSSNQRASFSSAGSELDVMAPGVSIQSTLPGGTYGAYNGTSMATPHVAGAAALILSKHPTWTNAQVRDRLESTATYLGNSFYYGKGLINVQAAAQ</sequence>
<protein>
    <recommendedName>
        <fullName>Subtilisin J</fullName>
        <ecNumber>3.4.21.62</ecNumber>
    </recommendedName>
</protein>
<evidence type="ECO:0000250" key="1"/>
<evidence type="ECO:0000255" key="2"/>
<evidence type="ECO:0000255" key="3">
    <source>
        <dbReference type="PROSITE-ProRule" id="PRU01240"/>
    </source>
</evidence>
<evidence type="ECO:0000305" key="4"/>
<organism>
    <name type="scientific">Geobacillus stearothermophilus</name>
    <name type="common">Bacillus stearothermophilus</name>
    <dbReference type="NCBI Taxonomy" id="1422"/>
    <lineage>
        <taxon>Bacteria</taxon>
        <taxon>Bacillati</taxon>
        <taxon>Bacillota</taxon>
        <taxon>Bacilli</taxon>
        <taxon>Bacillales</taxon>
        <taxon>Anoxybacillaceae</taxon>
        <taxon>Geobacillus</taxon>
    </lineage>
</organism>
<keyword id="KW-0106">Calcium</keyword>
<keyword id="KW-0378">Hydrolase</keyword>
<keyword id="KW-0479">Metal-binding</keyword>
<keyword id="KW-0645">Protease</keyword>
<keyword id="KW-0964">Secreted</keyword>
<keyword id="KW-0720">Serine protease</keyword>
<keyword id="KW-0732">Signal</keyword>
<keyword id="KW-0749">Sporulation</keyword>
<keyword id="KW-0865">Zymogen</keyword>
<reference key="1">
    <citation type="journal article" date="1992" name="Biochem. Biophys. Res. Commun.">
        <title>Molecular cloning of a subtilisin J gene from Bacillus stearothermophilus and its expression in Bacillus subtilis.</title>
        <authorList>
            <person name="Jang J.S."/>
            <person name="Kang D.O."/>
            <person name="Chun M.J."/>
            <person name="Byun S.M."/>
        </authorList>
    </citation>
    <scope>NUCLEOTIDE SEQUENCE [GENOMIC DNA]</scope>
    <source>
        <strain>DSM 2313 / NCIMB 10278 / KCTC 1823 / 186</strain>
    </source>
</reference>